<reference key="1">
    <citation type="submission" date="2006-03" db="EMBL/GenBank/DDBJ databases">
        <title>Complete sequence of Rhodopseudomonas palustris BisB18.</title>
        <authorList>
            <consortium name="US DOE Joint Genome Institute"/>
            <person name="Copeland A."/>
            <person name="Lucas S."/>
            <person name="Lapidus A."/>
            <person name="Barry K."/>
            <person name="Detter J.C."/>
            <person name="Glavina del Rio T."/>
            <person name="Hammon N."/>
            <person name="Israni S."/>
            <person name="Dalin E."/>
            <person name="Tice H."/>
            <person name="Pitluck S."/>
            <person name="Chain P."/>
            <person name="Malfatti S."/>
            <person name="Shin M."/>
            <person name="Vergez L."/>
            <person name="Schmutz J."/>
            <person name="Larimer F."/>
            <person name="Land M."/>
            <person name="Hauser L."/>
            <person name="Pelletier D.A."/>
            <person name="Kyrpides N."/>
            <person name="Anderson I."/>
            <person name="Oda Y."/>
            <person name="Harwood C.S."/>
            <person name="Richardson P."/>
        </authorList>
    </citation>
    <scope>NUCLEOTIDE SEQUENCE [LARGE SCALE GENOMIC DNA]</scope>
    <source>
        <strain>BisB18</strain>
    </source>
</reference>
<protein>
    <recommendedName>
        <fullName evidence="1">Large ribosomal subunit protein uL29</fullName>
    </recommendedName>
    <alternativeName>
        <fullName evidence="2">50S ribosomal protein L29</fullName>
    </alternativeName>
</protein>
<accession>Q211F6</accession>
<gene>
    <name evidence="1" type="primary">rpmC</name>
    <name type="ordered locus">RPC_3440</name>
</gene>
<evidence type="ECO:0000255" key="1">
    <source>
        <dbReference type="HAMAP-Rule" id="MF_00374"/>
    </source>
</evidence>
<evidence type="ECO:0000305" key="2"/>
<proteinExistence type="inferred from homology"/>
<comment type="similarity">
    <text evidence="1">Belongs to the universal ribosomal protein uL29 family.</text>
</comment>
<sequence length="68" mass="7889">MAEMKTADIRAMSPDQKDDAVAELKKERFNLRFQRATGQLENTSRLREARRDIARIKTIAAQQRDAKK</sequence>
<dbReference type="EMBL" id="CP000301">
    <property type="protein sequence ID" value="ABD88980.1"/>
    <property type="molecule type" value="Genomic_DNA"/>
</dbReference>
<dbReference type="SMR" id="Q211F6"/>
<dbReference type="STRING" id="316056.RPC_3440"/>
<dbReference type="KEGG" id="rpc:RPC_3440"/>
<dbReference type="eggNOG" id="COG0255">
    <property type="taxonomic scope" value="Bacteria"/>
</dbReference>
<dbReference type="HOGENOM" id="CLU_158491_1_0_5"/>
<dbReference type="OrthoDB" id="9815192at2"/>
<dbReference type="GO" id="GO:0022625">
    <property type="term" value="C:cytosolic large ribosomal subunit"/>
    <property type="evidence" value="ECO:0007669"/>
    <property type="project" value="TreeGrafter"/>
</dbReference>
<dbReference type="GO" id="GO:0003735">
    <property type="term" value="F:structural constituent of ribosome"/>
    <property type="evidence" value="ECO:0007669"/>
    <property type="project" value="InterPro"/>
</dbReference>
<dbReference type="GO" id="GO:0006412">
    <property type="term" value="P:translation"/>
    <property type="evidence" value="ECO:0007669"/>
    <property type="project" value="UniProtKB-UniRule"/>
</dbReference>
<dbReference type="CDD" id="cd00427">
    <property type="entry name" value="Ribosomal_L29_HIP"/>
    <property type="match status" value="1"/>
</dbReference>
<dbReference type="FunFam" id="1.10.287.310:FF:000005">
    <property type="entry name" value="50S ribosomal protein L29"/>
    <property type="match status" value="1"/>
</dbReference>
<dbReference type="Gene3D" id="1.10.287.310">
    <property type="match status" value="1"/>
</dbReference>
<dbReference type="HAMAP" id="MF_00374">
    <property type="entry name" value="Ribosomal_uL29"/>
    <property type="match status" value="1"/>
</dbReference>
<dbReference type="InterPro" id="IPR050063">
    <property type="entry name" value="Ribosomal_protein_uL29"/>
</dbReference>
<dbReference type="InterPro" id="IPR001854">
    <property type="entry name" value="Ribosomal_uL29"/>
</dbReference>
<dbReference type="InterPro" id="IPR018254">
    <property type="entry name" value="Ribosomal_uL29_CS"/>
</dbReference>
<dbReference type="InterPro" id="IPR036049">
    <property type="entry name" value="Ribosomal_uL29_sf"/>
</dbReference>
<dbReference type="NCBIfam" id="TIGR00012">
    <property type="entry name" value="L29"/>
    <property type="match status" value="1"/>
</dbReference>
<dbReference type="PANTHER" id="PTHR10916">
    <property type="entry name" value="60S RIBOSOMAL PROTEIN L35/50S RIBOSOMAL PROTEIN L29"/>
    <property type="match status" value="1"/>
</dbReference>
<dbReference type="PANTHER" id="PTHR10916:SF0">
    <property type="entry name" value="LARGE RIBOSOMAL SUBUNIT PROTEIN UL29C"/>
    <property type="match status" value="1"/>
</dbReference>
<dbReference type="Pfam" id="PF00831">
    <property type="entry name" value="Ribosomal_L29"/>
    <property type="match status" value="1"/>
</dbReference>
<dbReference type="SUPFAM" id="SSF46561">
    <property type="entry name" value="Ribosomal protein L29 (L29p)"/>
    <property type="match status" value="1"/>
</dbReference>
<dbReference type="PROSITE" id="PS00579">
    <property type="entry name" value="RIBOSOMAL_L29"/>
    <property type="match status" value="1"/>
</dbReference>
<organism>
    <name type="scientific">Rhodopseudomonas palustris (strain BisB18)</name>
    <dbReference type="NCBI Taxonomy" id="316056"/>
    <lineage>
        <taxon>Bacteria</taxon>
        <taxon>Pseudomonadati</taxon>
        <taxon>Pseudomonadota</taxon>
        <taxon>Alphaproteobacteria</taxon>
        <taxon>Hyphomicrobiales</taxon>
        <taxon>Nitrobacteraceae</taxon>
        <taxon>Rhodopseudomonas</taxon>
    </lineage>
</organism>
<feature type="chain" id="PRO_1000007582" description="Large ribosomal subunit protein uL29">
    <location>
        <begin position="1"/>
        <end position="68"/>
    </location>
</feature>
<name>RL29_RHOPB</name>
<keyword id="KW-0687">Ribonucleoprotein</keyword>
<keyword id="KW-0689">Ribosomal protein</keyword>